<reference key="1">
    <citation type="journal article" date="1997" name="Nature">
        <title>The complete genome sequence of the hyperthermophilic, sulphate-reducing archaeon Archaeoglobus fulgidus.</title>
        <authorList>
            <person name="Klenk H.-P."/>
            <person name="Clayton R.A."/>
            <person name="Tomb J.-F."/>
            <person name="White O."/>
            <person name="Nelson K.E."/>
            <person name="Ketchum K.A."/>
            <person name="Dodson R.J."/>
            <person name="Gwinn M.L."/>
            <person name="Hickey E.K."/>
            <person name="Peterson J.D."/>
            <person name="Richardson D.L."/>
            <person name="Kerlavage A.R."/>
            <person name="Graham D.E."/>
            <person name="Kyrpides N.C."/>
            <person name="Fleischmann R.D."/>
            <person name="Quackenbush J."/>
            <person name="Lee N.H."/>
            <person name="Sutton G.G."/>
            <person name="Gill S.R."/>
            <person name="Kirkness E.F."/>
            <person name="Dougherty B.A."/>
            <person name="McKenney K."/>
            <person name="Adams M.D."/>
            <person name="Loftus B.J."/>
            <person name="Peterson S.N."/>
            <person name="Reich C.I."/>
            <person name="McNeil L.K."/>
            <person name="Badger J.H."/>
            <person name="Glodek A."/>
            <person name="Zhou L."/>
            <person name="Overbeek R."/>
            <person name="Gocayne J.D."/>
            <person name="Weidman J.F."/>
            <person name="McDonald L.A."/>
            <person name="Utterback T.R."/>
            <person name="Cotton M.D."/>
            <person name="Spriggs T."/>
            <person name="Artiach P."/>
            <person name="Kaine B.P."/>
            <person name="Sykes S.M."/>
            <person name="Sadow P.W."/>
            <person name="D'Andrea K.P."/>
            <person name="Bowman C."/>
            <person name="Fujii C."/>
            <person name="Garland S.A."/>
            <person name="Mason T.M."/>
            <person name="Olsen G.J."/>
            <person name="Fraser C.M."/>
            <person name="Smith H.O."/>
            <person name="Woese C.R."/>
            <person name="Venter J.C."/>
        </authorList>
    </citation>
    <scope>NUCLEOTIDE SEQUENCE [LARGE SCALE GENOMIC DNA]</scope>
    <source>
        <strain>ATCC 49558 / DSM 4304 / JCM 9628 / NBRC 100126 / VC-16</strain>
    </source>
</reference>
<accession>O29324</accession>
<keyword id="KW-1185">Reference proteome</keyword>
<keyword id="KW-0687">Ribonucleoprotein</keyword>
<keyword id="KW-0689">Ribosomal protein</keyword>
<comment type="function">
    <text evidence="1">Involved in the binding of tRNA to the ribosomes.</text>
</comment>
<comment type="subunit">
    <text evidence="1">Part of the 30S ribosomal subunit.</text>
</comment>
<comment type="similarity">
    <text evidence="1">Belongs to the universal ribosomal protein uS10 family.</text>
</comment>
<dbReference type="EMBL" id="AE000782">
    <property type="protein sequence ID" value="AAB90311.1"/>
    <property type="molecule type" value="Genomic_DNA"/>
</dbReference>
<dbReference type="PIR" id="B69367">
    <property type="entry name" value="B69367"/>
</dbReference>
<dbReference type="SMR" id="O29324"/>
<dbReference type="STRING" id="224325.AF_0938"/>
<dbReference type="PaxDb" id="224325-AF_0938"/>
<dbReference type="EnsemblBacteria" id="AAB90311">
    <property type="protein sequence ID" value="AAB90311"/>
    <property type="gene ID" value="AF_0938"/>
</dbReference>
<dbReference type="KEGG" id="afu:AF_0938"/>
<dbReference type="eggNOG" id="arCOG01758">
    <property type="taxonomic scope" value="Archaea"/>
</dbReference>
<dbReference type="HOGENOM" id="CLU_122625_0_1_2"/>
<dbReference type="OrthoDB" id="371736at2157"/>
<dbReference type="PhylomeDB" id="O29324"/>
<dbReference type="Proteomes" id="UP000002199">
    <property type="component" value="Chromosome"/>
</dbReference>
<dbReference type="GO" id="GO:0015935">
    <property type="term" value="C:small ribosomal subunit"/>
    <property type="evidence" value="ECO:0007669"/>
    <property type="project" value="InterPro"/>
</dbReference>
<dbReference type="GO" id="GO:0003735">
    <property type="term" value="F:structural constituent of ribosome"/>
    <property type="evidence" value="ECO:0007669"/>
    <property type="project" value="InterPro"/>
</dbReference>
<dbReference type="GO" id="GO:0000049">
    <property type="term" value="F:tRNA binding"/>
    <property type="evidence" value="ECO:0007669"/>
    <property type="project" value="UniProtKB-UniRule"/>
</dbReference>
<dbReference type="GO" id="GO:0006412">
    <property type="term" value="P:translation"/>
    <property type="evidence" value="ECO:0007669"/>
    <property type="project" value="UniProtKB-UniRule"/>
</dbReference>
<dbReference type="FunFam" id="3.30.70.600:FF:000004">
    <property type="entry name" value="30S ribosomal protein S10"/>
    <property type="match status" value="1"/>
</dbReference>
<dbReference type="Gene3D" id="3.30.70.600">
    <property type="entry name" value="Ribosomal protein S10 domain"/>
    <property type="match status" value="1"/>
</dbReference>
<dbReference type="HAMAP" id="MF_00508">
    <property type="entry name" value="Ribosomal_uS10"/>
    <property type="match status" value="1"/>
</dbReference>
<dbReference type="InterPro" id="IPR001848">
    <property type="entry name" value="Ribosomal_uS10"/>
</dbReference>
<dbReference type="InterPro" id="IPR018268">
    <property type="entry name" value="Ribosomal_uS10_CS"/>
</dbReference>
<dbReference type="InterPro" id="IPR027486">
    <property type="entry name" value="Ribosomal_uS10_dom"/>
</dbReference>
<dbReference type="InterPro" id="IPR036838">
    <property type="entry name" value="Ribosomal_uS10_dom_sf"/>
</dbReference>
<dbReference type="InterPro" id="IPR005729">
    <property type="entry name" value="Ribosomal_uS10_euk/arc"/>
</dbReference>
<dbReference type="NCBIfam" id="TIGR01046">
    <property type="entry name" value="uS10_euk_arch"/>
    <property type="match status" value="1"/>
</dbReference>
<dbReference type="PANTHER" id="PTHR11700">
    <property type="entry name" value="30S RIBOSOMAL PROTEIN S10 FAMILY MEMBER"/>
    <property type="match status" value="1"/>
</dbReference>
<dbReference type="Pfam" id="PF00338">
    <property type="entry name" value="Ribosomal_S10"/>
    <property type="match status" value="1"/>
</dbReference>
<dbReference type="PRINTS" id="PR00971">
    <property type="entry name" value="RIBOSOMALS10"/>
</dbReference>
<dbReference type="SMART" id="SM01403">
    <property type="entry name" value="Ribosomal_S10"/>
    <property type="match status" value="1"/>
</dbReference>
<dbReference type="SUPFAM" id="SSF54999">
    <property type="entry name" value="Ribosomal protein S10"/>
    <property type="match status" value="1"/>
</dbReference>
<dbReference type="PROSITE" id="PS00361">
    <property type="entry name" value="RIBOSOMAL_S10"/>
    <property type="match status" value="1"/>
</dbReference>
<protein>
    <recommendedName>
        <fullName evidence="1">Small ribosomal subunit protein uS10</fullName>
    </recommendedName>
    <alternativeName>
        <fullName evidence="2">30S ribosomal protein S10</fullName>
    </alternativeName>
</protein>
<sequence>MPIKGPKARIKLSGLNPRELDRICSQIKEIANKTGVELSGPVPLPTRRMVVPVRKAPDGEGSETWDHWEMRVHKRLIDISADERALRQIMRIQVPRDVNIEIVLES</sequence>
<organism>
    <name type="scientific">Archaeoglobus fulgidus (strain ATCC 49558 / DSM 4304 / JCM 9628 / NBRC 100126 / VC-16)</name>
    <dbReference type="NCBI Taxonomy" id="224325"/>
    <lineage>
        <taxon>Archaea</taxon>
        <taxon>Methanobacteriati</taxon>
        <taxon>Methanobacteriota</taxon>
        <taxon>Archaeoglobi</taxon>
        <taxon>Archaeoglobales</taxon>
        <taxon>Archaeoglobaceae</taxon>
        <taxon>Archaeoglobus</taxon>
    </lineage>
</organism>
<proteinExistence type="inferred from homology"/>
<name>RS10_ARCFU</name>
<feature type="chain" id="PRO_0000146641" description="Small ribosomal subunit protein uS10">
    <location>
        <begin position="1"/>
        <end position="106"/>
    </location>
</feature>
<gene>
    <name evidence="1" type="primary">rps10</name>
    <name type="ordered locus">AF_0938</name>
</gene>
<evidence type="ECO:0000255" key="1">
    <source>
        <dbReference type="HAMAP-Rule" id="MF_00508"/>
    </source>
</evidence>
<evidence type="ECO:0000305" key="2"/>